<accession>P0DL40</accession>
<organism>
    <name type="scientific">Vespa magnifica</name>
    <name type="common">Hornet</name>
    <dbReference type="NCBI Taxonomy" id="202807"/>
    <lineage>
        <taxon>Eukaryota</taxon>
        <taxon>Metazoa</taxon>
        <taxon>Ecdysozoa</taxon>
        <taxon>Arthropoda</taxon>
        <taxon>Hexapoda</taxon>
        <taxon>Insecta</taxon>
        <taxon>Pterygota</taxon>
        <taxon>Neoptera</taxon>
        <taxon>Endopterygota</taxon>
        <taxon>Hymenoptera</taxon>
        <taxon>Apocrita</taxon>
        <taxon>Aculeata</taxon>
        <taxon>Vespoidea</taxon>
        <taxon>Vespidae</taxon>
        <taxon>Vespinae</taxon>
        <taxon>Vespa</taxon>
    </lineage>
</organism>
<evidence type="ECO:0000269" key="1">
    <source>
    </source>
</evidence>
<evidence type="ECO:0000303" key="2">
    <source>
    </source>
</evidence>
<evidence type="ECO:0000305" key="3"/>
<feature type="signal peptide" evidence="1">
    <location>
        <begin position="1"/>
        <end position="21"/>
    </location>
</feature>
<feature type="chain" id="PRO_0000432327" description="Vespin" evidence="1">
    <location>
        <begin position="24"/>
        <end position="67"/>
    </location>
</feature>
<name>VESPI_VESMG</name>
<protein>
    <recommendedName>
        <fullName evidence="2">Vespin</fullName>
    </recommendedName>
</protein>
<keyword id="KW-0165">Cleavage on pair of basic residues</keyword>
<keyword id="KW-0903">Direct protein sequencing</keyword>
<keyword id="KW-0964">Secreted</keyword>
<keyword id="KW-0732">Signal</keyword>
<dbReference type="GO" id="GO:0005576">
    <property type="term" value="C:extracellular region"/>
    <property type="evidence" value="ECO:0007669"/>
    <property type="project" value="UniProtKB-SubCell"/>
</dbReference>
<proteinExistence type="evidence at protein level"/>
<comment type="function">
    <text evidence="1">Shows contractile activity on isolated ileum smooth muscle.</text>
</comment>
<comment type="subcellular location">
    <subcellularLocation>
        <location evidence="1">Secreted</location>
    </subcellularLocation>
</comment>
<comment type="tissue specificity">
    <text evidence="3">Expressed by the venom gland.</text>
</comment>
<comment type="mass spectrometry"/>
<sequence>MHPIIWELSHMVDLQAAAQKLKRCYQRRVAITAGGLKHRLMSSLIIIIIIRINYLRDNSVIILESSY</sequence>
<reference key="1">
    <citation type="journal article" date="2010" name="J. Venom Res.">
        <title>A novel bioactive peptide from wasp venom.</title>
        <authorList>
            <person name="Chen L."/>
            <person name="Chen W."/>
            <person name="Yang H."/>
            <person name="Lai R."/>
        </authorList>
    </citation>
    <scope>NUCLEOTIDE SEQUENCE [MRNA]</scope>
    <scope>PROTEIN SEQUENCE OF 24-67</scope>
    <scope>SYNTHESIS OF 24-67</scope>
    <scope>FUNCTION</scope>
    <scope>MASS SPECTROMETRY</scope>
    <scope>SUBCELLULAR LOCATION</scope>
    <source>
        <tissue>Venom</tissue>
        <tissue>Venom gland</tissue>
    </source>
</reference>